<sequence length="148" mass="16473">MSSQNTSNSRHPASSASALPNRTNTARRSTSPRTSTGSSSTNTNTKTVDHAGTTFISSTSKRGRSTKAGSVHSVPMKRTKRVRRTPAQRIEHENKENIQTEKVYRIKPVQRVLSPSDLTNELTILDLFHVPRPNETFDITDRVNNTSR</sequence>
<feature type="chain" id="PRO_0000096401" description="Meiosis inducing protein mei3">
    <location>
        <begin position="1"/>
        <end position="148"/>
    </location>
</feature>
<feature type="region of interest" description="Disordered" evidence="1">
    <location>
        <begin position="1"/>
        <end position="96"/>
    </location>
</feature>
<feature type="compositionally biased region" description="Polar residues" evidence="1">
    <location>
        <begin position="1"/>
        <end position="20"/>
    </location>
</feature>
<feature type="compositionally biased region" description="Low complexity" evidence="1">
    <location>
        <begin position="21"/>
        <end position="46"/>
    </location>
</feature>
<feature type="compositionally biased region" description="Basic residues" evidence="1">
    <location>
        <begin position="75"/>
        <end position="86"/>
    </location>
</feature>
<reference key="1">
    <citation type="journal article" date="1987" name="EMBO J.">
        <title>The product of the mei3+ gene, expressed under control of the mating-type locus, induces meiosis and sporulation in fission yeast.</title>
        <authorList>
            <person name="McLeod M."/>
            <person name="Stein M."/>
            <person name="Beach D."/>
        </authorList>
    </citation>
    <scope>NUCLEOTIDE SEQUENCE [GENOMIC DNA]</scope>
    <scope>FUNCTION</scope>
    <scope>DEVELOPMENTAL STAGE</scope>
</reference>
<reference key="2">
    <citation type="journal article" date="2002" name="Nature">
        <title>The genome sequence of Schizosaccharomyces pombe.</title>
        <authorList>
            <person name="Wood V."/>
            <person name="Gwilliam R."/>
            <person name="Rajandream M.A."/>
            <person name="Lyne M.H."/>
            <person name="Lyne R."/>
            <person name="Stewart A."/>
            <person name="Sgouros J.G."/>
            <person name="Peat N."/>
            <person name="Hayles J."/>
            <person name="Baker S.G."/>
            <person name="Basham D."/>
            <person name="Bowman S."/>
            <person name="Brooks K."/>
            <person name="Brown D."/>
            <person name="Brown S."/>
            <person name="Chillingworth T."/>
            <person name="Churcher C.M."/>
            <person name="Collins M."/>
            <person name="Connor R."/>
            <person name="Cronin A."/>
            <person name="Davis P."/>
            <person name="Feltwell T."/>
            <person name="Fraser A."/>
            <person name="Gentles S."/>
            <person name="Goble A."/>
            <person name="Hamlin N."/>
            <person name="Harris D.E."/>
            <person name="Hidalgo J."/>
            <person name="Hodgson G."/>
            <person name="Holroyd S."/>
            <person name="Hornsby T."/>
            <person name="Howarth S."/>
            <person name="Huckle E.J."/>
            <person name="Hunt S."/>
            <person name="Jagels K."/>
            <person name="James K.D."/>
            <person name="Jones L."/>
            <person name="Jones M."/>
            <person name="Leather S."/>
            <person name="McDonald S."/>
            <person name="McLean J."/>
            <person name="Mooney P."/>
            <person name="Moule S."/>
            <person name="Mungall K.L."/>
            <person name="Murphy L.D."/>
            <person name="Niblett D."/>
            <person name="Odell C."/>
            <person name="Oliver K."/>
            <person name="O'Neil S."/>
            <person name="Pearson D."/>
            <person name="Quail M.A."/>
            <person name="Rabbinowitsch E."/>
            <person name="Rutherford K.M."/>
            <person name="Rutter S."/>
            <person name="Saunders D."/>
            <person name="Seeger K."/>
            <person name="Sharp S."/>
            <person name="Skelton J."/>
            <person name="Simmonds M.N."/>
            <person name="Squares R."/>
            <person name="Squares S."/>
            <person name="Stevens K."/>
            <person name="Taylor K."/>
            <person name="Taylor R.G."/>
            <person name="Tivey A."/>
            <person name="Walsh S.V."/>
            <person name="Warren T."/>
            <person name="Whitehead S."/>
            <person name="Woodward J.R."/>
            <person name="Volckaert G."/>
            <person name="Aert R."/>
            <person name="Robben J."/>
            <person name="Grymonprez B."/>
            <person name="Weltjens I."/>
            <person name="Vanstreels E."/>
            <person name="Rieger M."/>
            <person name="Schaefer M."/>
            <person name="Mueller-Auer S."/>
            <person name="Gabel C."/>
            <person name="Fuchs M."/>
            <person name="Duesterhoeft A."/>
            <person name="Fritzc C."/>
            <person name="Holzer E."/>
            <person name="Moestl D."/>
            <person name="Hilbert H."/>
            <person name="Borzym K."/>
            <person name="Langer I."/>
            <person name="Beck A."/>
            <person name="Lehrach H."/>
            <person name="Reinhardt R."/>
            <person name="Pohl T.M."/>
            <person name="Eger P."/>
            <person name="Zimmermann W."/>
            <person name="Wedler H."/>
            <person name="Wambutt R."/>
            <person name="Purnelle B."/>
            <person name="Goffeau A."/>
            <person name="Cadieu E."/>
            <person name="Dreano S."/>
            <person name="Gloux S."/>
            <person name="Lelaure V."/>
            <person name="Mottier S."/>
            <person name="Galibert F."/>
            <person name="Aves S.J."/>
            <person name="Xiang Z."/>
            <person name="Hunt C."/>
            <person name="Moore K."/>
            <person name="Hurst S.M."/>
            <person name="Lucas M."/>
            <person name="Rochet M."/>
            <person name="Gaillardin C."/>
            <person name="Tallada V.A."/>
            <person name="Garzon A."/>
            <person name="Thode G."/>
            <person name="Daga R.R."/>
            <person name="Cruzado L."/>
            <person name="Jimenez J."/>
            <person name="Sanchez M."/>
            <person name="del Rey F."/>
            <person name="Benito J."/>
            <person name="Dominguez A."/>
            <person name="Revuelta J.L."/>
            <person name="Moreno S."/>
            <person name="Armstrong J."/>
            <person name="Forsburg S.L."/>
            <person name="Cerutti L."/>
            <person name="Lowe T."/>
            <person name="McCombie W.R."/>
            <person name="Paulsen I."/>
            <person name="Potashkin J."/>
            <person name="Shpakovski G.V."/>
            <person name="Ussery D."/>
            <person name="Barrell B.G."/>
            <person name="Nurse P."/>
        </authorList>
    </citation>
    <scope>NUCLEOTIDE SEQUENCE [LARGE SCALE GENOMIC DNA]</scope>
    <source>
        <strain>972 / ATCC 24843</strain>
    </source>
</reference>
<reference key="3">
    <citation type="journal article" date="1988" name="Nature">
        <title>A specific inhibitor of the ran1+ protein kinase regulates entry into meiosis in Schizosaccharomyces pombe.</title>
        <authorList>
            <person name="McLeod M."/>
            <person name="Beach D."/>
        </authorList>
    </citation>
    <scope>FUNCTION</scope>
</reference>
<reference key="4">
    <citation type="journal article" date="1996" name="Cell">
        <title>Molecular mimicry in development: identification of ste11+ as a substrate and mei3+ as a pseudosubstrate inhibitor of ran1+ kinase.</title>
        <authorList>
            <person name="Li P."/>
            <person name="McLeod M."/>
        </authorList>
    </citation>
    <scope>FUNCTION</scope>
</reference>
<reference key="5">
    <citation type="journal article" date="2018" name="Nature">
        <title>Gamete fusion triggers bipartite transcription factor assembly to block re-fertilization.</title>
        <authorList>
            <person name="Vjestica A."/>
            <person name="Merlini L."/>
            <person name="Nkosi P.J."/>
            <person name="Martin S.G."/>
        </authorList>
    </citation>
    <scope>DEVELOPMENTAL STAGE</scope>
</reference>
<organism>
    <name type="scientific">Schizosaccharomyces pombe (strain 972 / ATCC 24843)</name>
    <name type="common">Fission yeast</name>
    <dbReference type="NCBI Taxonomy" id="284812"/>
    <lineage>
        <taxon>Eukaryota</taxon>
        <taxon>Fungi</taxon>
        <taxon>Dikarya</taxon>
        <taxon>Ascomycota</taxon>
        <taxon>Taphrinomycotina</taxon>
        <taxon>Schizosaccharomycetes</taxon>
        <taxon>Schizosaccharomycetales</taxon>
        <taxon>Schizosaccharomycetaceae</taxon>
        <taxon>Schizosaccharomyces</taxon>
    </lineage>
</organism>
<name>MEI3_SCHPO</name>
<comment type="function">
    <text evidence="3 4 5">Acts as a critical meiotic inducer by binding non-covalently to protein kinase ran1/pat1 inhibiting its enzymatic activity. Inhibits ran1/pat1 by acting as a pseudosubstrate for ran1/pat1 instead of its natural substrate ste11. Inactivation of the ran1/pat1 protein kinase is both necessary and sufficient to divert a vegetative cell from mitotic division to meiotic differentiation.</text>
</comment>
<comment type="developmental stage">
    <text evidence="2 3">Expressed under control of the mating-type locus. Asymmetrically expressed in wild-type zygotes. Expression is significantly more rapid when encoded in the P genome (expressing nuclear homeodomain factor Pi) than in the M genome (expressing cytosolic peptide Mi).</text>
</comment>
<keyword id="KW-0469">Meiosis</keyword>
<keyword id="KW-1185">Reference proteome</keyword>
<keyword id="KW-0749">Sporulation</keyword>
<accession>P08090</accession>
<accession>A0AAN2H803</accession>
<gene>
    <name evidence="6" type="primary">mei3</name>
    <name evidence="8" type="ORF">SPBC119.04</name>
</gene>
<dbReference type="EMBL" id="X05142">
    <property type="protein sequence ID" value="CAA28788.1"/>
    <property type="molecule type" value="Genomic_DNA"/>
</dbReference>
<dbReference type="EMBL" id="CU329671">
    <property type="protein sequence ID" value="CAA17919.1"/>
    <property type="molecule type" value="Genomic_DNA"/>
</dbReference>
<dbReference type="EMBL" id="CU329671">
    <property type="protein sequence ID" value="CAK9839585.1"/>
    <property type="molecule type" value="Genomic_DNA"/>
</dbReference>
<dbReference type="PIR" id="S07196">
    <property type="entry name" value="S07196"/>
</dbReference>
<dbReference type="RefSeq" id="NP_595285.1">
    <property type="nucleotide sequence ID" value="NM_001021192.2"/>
</dbReference>
<dbReference type="BioGRID" id="276608">
    <property type="interactions" value="13"/>
</dbReference>
<dbReference type="IntAct" id="P08090">
    <property type="interactions" value="3"/>
</dbReference>
<dbReference type="STRING" id="284812.P08090"/>
<dbReference type="PaxDb" id="4896-SPBC119.04.1"/>
<dbReference type="EnsemblFungi" id="SPBC119.04.1">
    <property type="protein sequence ID" value="SPBC119.04.1:pep"/>
    <property type="gene ID" value="SPBC119.04"/>
</dbReference>
<dbReference type="GeneID" id="2540070"/>
<dbReference type="KEGG" id="spo:2540070"/>
<dbReference type="PomBase" id="SPBC119.04">
    <property type="gene designation" value="mei3"/>
</dbReference>
<dbReference type="VEuPathDB" id="FungiDB:SPBC119.04"/>
<dbReference type="HOGENOM" id="CLU_1759871_0_0_1"/>
<dbReference type="InParanoid" id="P08090"/>
<dbReference type="OMA" id="CDATMDI"/>
<dbReference type="PRO" id="PR:P08090"/>
<dbReference type="Proteomes" id="UP000002485">
    <property type="component" value="Chromosome II"/>
</dbReference>
<dbReference type="GO" id="GO:0030291">
    <property type="term" value="F:protein serine/threonine kinase inhibitor activity"/>
    <property type="evidence" value="ECO:0000314"/>
    <property type="project" value="PomBase"/>
</dbReference>
<dbReference type="GO" id="GO:0051728">
    <property type="term" value="P:cell cycle switching, mitotic to meiotic cell cycle"/>
    <property type="evidence" value="ECO:0000315"/>
    <property type="project" value="PomBase"/>
</dbReference>
<dbReference type="GO" id="GO:0051321">
    <property type="term" value="P:meiotic cell cycle"/>
    <property type="evidence" value="ECO:0007669"/>
    <property type="project" value="UniProtKB-KW"/>
</dbReference>
<dbReference type="GO" id="GO:0140538">
    <property type="term" value="P:negative regulation of conjugation with zygote"/>
    <property type="evidence" value="ECO:0000315"/>
    <property type="project" value="PomBase"/>
</dbReference>
<dbReference type="GO" id="GO:0030435">
    <property type="term" value="P:sporulation resulting in formation of a cellular spore"/>
    <property type="evidence" value="ECO:0007669"/>
    <property type="project" value="UniProtKB-KW"/>
</dbReference>
<protein>
    <recommendedName>
        <fullName evidence="7">Meiosis inducing protein mei3</fullName>
    </recommendedName>
</protein>
<evidence type="ECO:0000256" key="1">
    <source>
        <dbReference type="SAM" id="MobiDB-lite"/>
    </source>
</evidence>
<evidence type="ECO:0000269" key="2">
    <source>
    </source>
</evidence>
<evidence type="ECO:0000269" key="3">
    <source>
    </source>
</evidence>
<evidence type="ECO:0000269" key="4">
    <source>
    </source>
</evidence>
<evidence type="ECO:0000269" key="5">
    <source>
    </source>
</evidence>
<evidence type="ECO:0000303" key="6">
    <source>
    </source>
</evidence>
<evidence type="ECO:0000305" key="7"/>
<evidence type="ECO:0000312" key="8">
    <source>
        <dbReference type="PomBase" id="SPBC119.04"/>
    </source>
</evidence>
<proteinExistence type="evidence at transcript level"/>